<gene>
    <name evidence="1" type="primary">zapD</name>
    <name type="ordered locus">SO_0412</name>
</gene>
<accession>Q8EJQ0</accession>
<evidence type="ECO:0000255" key="1">
    <source>
        <dbReference type="HAMAP-Rule" id="MF_01092"/>
    </source>
</evidence>
<comment type="function">
    <text evidence="1">Cell division factor that enhances FtsZ-ring assembly. Directly interacts with FtsZ and promotes bundling of FtsZ protofilaments, with a reduction in FtsZ GTPase activity.</text>
</comment>
<comment type="subunit">
    <text evidence="1">Interacts with FtsZ.</text>
</comment>
<comment type="subcellular location">
    <subcellularLocation>
        <location evidence="1">Cytoplasm</location>
    </subcellularLocation>
    <text evidence="1">Localizes to mid-cell in an FtsZ-dependent manner.</text>
</comment>
<comment type="similarity">
    <text evidence="1">Belongs to the ZapD family.</text>
</comment>
<sequence>MTDLVYEQPLNEKIRSYLRLEYLSKQLCNNLNNDHQHRCFYPLFSLCELSERCDYRNEVLKDIERNLLQLSKWQELEHIDSKQITFYIEALTQARESLQRPERCGNQLKQDRFLSALRQRFGMPGACCNFDLPQLHFWLAKPWDERRQDYQAWVSHFEPLLTPIALLLQLTRSTADYAKATAHAGFYQGDSTQALSLVRVKVDAAHGCYPTISGHKNRFAIHFVQFDQQRHSDRSIEFLLATCA</sequence>
<feature type="chain" id="PRO_0000211680" description="Cell division protein ZapD">
    <location>
        <begin position="1"/>
        <end position="244"/>
    </location>
</feature>
<dbReference type="EMBL" id="AE014299">
    <property type="protein sequence ID" value="AAN53495.1"/>
    <property type="molecule type" value="Genomic_DNA"/>
</dbReference>
<dbReference type="RefSeq" id="NP_716050.1">
    <property type="nucleotide sequence ID" value="NC_004347.2"/>
</dbReference>
<dbReference type="RefSeq" id="WP_011070772.1">
    <property type="nucleotide sequence ID" value="NC_004347.2"/>
</dbReference>
<dbReference type="SMR" id="Q8EJQ0"/>
<dbReference type="STRING" id="211586.SO_0412"/>
<dbReference type="PaxDb" id="211586-SO_0412"/>
<dbReference type="KEGG" id="son:SO_0412"/>
<dbReference type="PATRIC" id="fig|211586.12.peg.402"/>
<dbReference type="eggNOG" id="COG4582">
    <property type="taxonomic scope" value="Bacteria"/>
</dbReference>
<dbReference type="HOGENOM" id="CLU_076303_0_0_6"/>
<dbReference type="OrthoDB" id="5294622at2"/>
<dbReference type="PhylomeDB" id="Q8EJQ0"/>
<dbReference type="BioCyc" id="SONE211586:G1GMP-397-MONOMER"/>
<dbReference type="Proteomes" id="UP000008186">
    <property type="component" value="Chromosome"/>
</dbReference>
<dbReference type="GO" id="GO:0032153">
    <property type="term" value="C:cell division site"/>
    <property type="evidence" value="ECO:0000318"/>
    <property type="project" value="GO_Central"/>
</dbReference>
<dbReference type="GO" id="GO:0005737">
    <property type="term" value="C:cytoplasm"/>
    <property type="evidence" value="ECO:0007669"/>
    <property type="project" value="UniProtKB-SubCell"/>
</dbReference>
<dbReference type="GO" id="GO:0000917">
    <property type="term" value="P:division septum assembly"/>
    <property type="evidence" value="ECO:0007669"/>
    <property type="project" value="UniProtKB-KW"/>
</dbReference>
<dbReference type="GO" id="GO:0043093">
    <property type="term" value="P:FtsZ-dependent cytokinesis"/>
    <property type="evidence" value="ECO:0000318"/>
    <property type="project" value="GO_Central"/>
</dbReference>
<dbReference type="Gene3D" id="1.10.3900.10">
    <property type="entry name" value="YacF-like"/>
    <property type="match status" value="1"/>
</dbReference>
<dbReference type="Gene3D" id="2.60.440.10">
    <property type="entry name" value="YacF-like domains"/>
    <property type="match status" value="1"/>
</dbReference>
<dbReference type="HAMAP" id="MF_01092">
    <property type="entry name" value="ZapD"/>
    <property type="match status" value="1"/>
</dbReference>
<dbReference type="InterPro" id="IPR009777">
    <property type="entry name" value="ZapD"/>
</dbReference>
<dbReference type="InterPro" id="IPR027462">
    <property type="entry name" value="ZapD_C"/>
</dbReference>
<dbReference type="InterPro" id="IPR036268">
    <property type="entry name" value="ZapD_sf"/>
</dbReference>
<dbReference type="NCBIfam" id="NF003654">
    <property type="entry name" value="PRK05287.1-2"/>
    <property type="match status" value="1"/>
</dbReference>
<dbReference type="NCBIfam" id="NF003655">
    <property type="entry name" value="PRK05287.1-3"/>
    <property type="match status" value="1"/>
</dbReference>
<dbReference type="PANTHER" id="PTHR39455">
    <property type="entry name" value="CELL DIVISION PROTEIN ZAPD"/>
    <property type="match status" value="1"/>
</dbReference>
<dbReference type="PANTHER" id="PTHR39455:SF1">
    <property type="entry name" value="CELL DIVISION PROTEIN ZAPD"/>
    <property type="match status" value="1"/>
</dbReference>
<dbReference type="Pfam" id="PF07072">
    <property type="entry name" value="ZapD"/>
    <property type="match status" value="1"/>
</dbReference>
<dbReference type="SUPFAM" id="SSF160950">
    <property type="entry name" value="YacF-like"/>
    <property type="match status" value="1"/>
</dbReference>
<name>ZAPD_SHEON</name>
<organism>
    <name type="scientific">Shewanella oneidensis (strain ATCC 700550 / JCM 31522 / CIP 106686 / LMG 19005 / NCIMB 14063 / MR-1)</name>
    <dbReference type="NCBI Taxonomy" id="211586"/>
    <lineage>
        <taxon>Bacteria</taxon>
        <taxon>Pseudomonadati</taxon>
        <taxon>Pseudomonadota</taxon>
        <taxon>Gammaproteobacteria</taxon>
        <taxon>Alteromonadales</taxon>
        <taxon>Shewanellaceae</taxon>
        <taxon>Shewanella</taxon>
    </lineage>
</organism>
<keyword id="KW-0131">Cell cycle</keyword>
<keyword id="KW-0132">Cell division</keyword>
<keyword id="KW-0963">Cytoplasm</keyword>
<keyword id="KW-1185">Reference proteome</keyword>
<keyword id="KW-0717">Septation</keyword>
<proteinExistence type="inferred from homology"/>
<protein>
    <recommendedName>
        <fullName evidence="1">Cell division protein ZapD</fullName>
    </recommendedName>
    <alternativeName>
        <fullName evidence="1">Z ring-associated protein D</fullName>
    </alternativeName>
</protein>
<reference key="1">
    <citation type="journal article" date="2002" name="Nat. Biotechnol.">
        <title>Genome sequence of the dissimilatory metal ion-reducing bacterium Shewanella oneidensis.</title>
        <authorList>
            <person name="Heidelberg J.F."/>
            <person name="Paulsen I.T."/>
            <person name="Nelson K.E."/>
            <person name="Gaidos E.J."/>
            <person name="Nelson W.C."/>
            <person name="Read T.D."/>
            <person name="Eisen J.A."/>
            <person name="Seshadri R."/>
            <person name="Ward N.L."/>
            <person name="Methe B.A."/>
            <person name="Clayton R.A."/>
            <person name="Meyer T."/>
            <person name="Tsapin A."/>
            <person name="Scott J."/>
            <person name="Beanan M.J."/>
            <person name="Brinkac L.M."/>
            <person name="Daugherty S.C."/>
            <person name="DeBoy R.T."/>
            <person name="Dodson R.J."/>
            <person name="Durkin A.S."/>
            <person name="Haft D.H."/>
            <person name="Kolonay J.F."/>
            <person name="Madupu R."/>
            <person name="Peterson J.D."/>
            <person name="Umayam L.A."/>
            <person name="White O."/>
            <person name="Wolf A.M."/>
            <person name="Vamathevan J.J."/>
            <person name="Weidman J.F."/>
            <person name="Impraim M."/>
            <person name="Lee K."/>
            <person name="Berry K.J."/>
            <person name="Lee C."/>
            <person name="Mueller J."/>
            <person name="Khouri H.M."/>
            <person name="Gill J."/>
            <person name="Utterback T.R."/>
            <person name="McDonald L.A."/>
            <person name="Feldblyum T.V."/>
            <person name="Smith H.O."/>
            <person name="Venter J.C."/>
            <person name="Nealson K.H."/>
            <person name="Fraser C.M."/>
        </authorList>
    </citation>
    <scope>NUCLEOTIDE SEQUENCE [LARGE SCALE GENOMIC DNA]</scope>
    <source>
        <strain>ATCC 700550 / JCM 31522 / CIP 106686 / LMG 19005 / NCIMB 14063 / MR-1</strain>
    </source>
</reference>